<proteinExistence type="evidence at protein level"/>
<feature type="initiator methionine" description="Removed">
    <location>
        <position position="1"/>
    </location>
</feature>
<feature type="chain" id="PRO_0000442603" description="Actin, aortic smooth muscle, intermediate form" evidence="2">
    <location>
        <begin position="2"/>
        <end position="377"/>
    </location>
</feature>
<feature type="chain" id="PRO_0000442604" description="Actin, aortic smooth muscle">
    <location>
        <begin position="3"/>
        <end position="377"/>
    </location>
</feature>
<feature type="modified residue" description="N-acetylcysteine; in intermediate form" evidence="2">
    <location>
        <position position="2"/>
    </location>
</feature>
<feature type="modified residue" description="N-acetylglutamate; in Actin, aortic smooth muscle" evidence="16">
    <location>
        <position position="3"/>
    </location>
</feature>
<feature type="modified residue" description="Methionine (R)-sulfoxide" evidence="2">
    <location>
        <position position="46"/>
    </location>
</feature>
<feature type="modified residue" description="Methionine (R)-sulfoxide" evidence="2">
    <location>
        <position position="49"/>
    </location>
</feature>
<feature type="modified residue" description="Tele-methylhistidine" evidence="12">
    <location>
        <position position="75"/>
    </location>
</feature>
<feature type="modified residue" description="N6-methyllysine" evidence="3">
    <location>
        <position position="86"/>
    </location>
</feature>
<feature type="cross-link" description="Isoglutamyl lysine isopeptide (Lys-Glu) (interchain with E-272); by Vibrio toxins RtxA and VgrG1" evidence="1">
    <location>
        <position position="52"/>
    </location>
</feature>
<feature type="cross-link" description="Isoglutamyl lysine isopeptide (Glu-Lys) (interchain with K-52); by Vibrio toxins RtxA and VgrG1" evidence="1">
    <location>
        <position position="272"/>
    </location>
</feature>
<feature type="sequence variant" id="VAR_062577" description="In AAT6; dbSNP:rs794728021." evidence="7">
    <original>R</original>
    <variation>H</variation>
    <location>
        <position position="39"/>
    </location>
</feature>
<feature type="sequence variant" id="VAR_045915" description="In AAT6." evidence="6 7">
    <original>N</original>
    <variation>T</variation>
    <location>
        <position position="117"/>
    </location>
</feature>
<feature type="sequence variant" id="VAR_045916" description="In AAT6; dbSNP:rs112602953." evidence="6 7">
    <original>R</original>
    <variation>Q</variation>
    <location>
        <position position="118"/>
    </location>
</feature>
<feature type="sequence variant" id="VAR_045917" description="In AAT6; dbSNP:rs751300489." evidence="6">
    <original>Y</original>
    <variation>H</variation>
    <location>
        <position position="135"/>
    </location>
</feature>
<feature type="sequence variant" id="VAR_062578" description="In AAT6." evidence="8">
    <original>Y</original>
    <variation>C</variation>
    <location>
        <position position="145"/>
    </location>
</feature>
<feature type="sequence variant" id="VAR_045918" description="In AAT6; dbSNP:rs121434526." evidence="6 7 8">
    <original>R</original>
    <variation>C</variation>
    <location>
        <position position="149"/>
    </location>
</feature>
<feature type="sequence variant" id="VAR_045919" description="In AAT6; dbSNP:rs1554841298." evidence="6 7">
    <original>V</original>
    <variation>A</variation>
    <location>
        <position position="154"/>
    </location>
</feature>
<feature type="sequence variant" id="VAR_085865" description="In SMDYS; dbSNP:rs886039303." evidence="11">
    <original>R</original>
    <variation>C</variation>
    <location>
        <position position="179"/>
    </location>
</feature>
<feature type="sequence variant" id="VAR_064516" description="In MYMY5 and SMDYS; disease phenotype include smooth muscle cells dysfunction in organs throughout the body with decreased contractile function in the iris, bladder and gastrointestinal tract; dbSNP:rs387906592." evidence="9 10">
    <original>R</original>
    <variation>H</variation>
    <location>
        <position position="179"/>
    </location>
</feature>
<feature type="sequence variant" id="VAR_062579" description="In AAT6; dbSNP:rs1057521105." evidence="7">
    <original>R</original>
    <variation>Q</variation>
    <location>
        <position position="185"/>
    </location>
</feature>
<feature type="sequence variant" id="VAR_011944" description="In dbSNP:rs1803028.">
    <original>T</original>
    <variation>S</variation>
    <location>
        <position position="196"/>
    </location>
</feature>
<feature type="sequence variant" id="VAR_062580" description="In AAT6; dbSNP:rs397516685." evidence="7 8">
    <original>R</original>
    <variation>Q</variation>
    <location>
        <position position="212"/>
    </location>
</feature>
<feature type="sequence variant" id="VAR_045920" description="In AAT6; dbSNP:rs121434528." evidence="6 7">
    <original>R</original>
    <variation>C</variation>
    <location>
        <position position="258"/>
    </location>
</feature>
<feature type="sequence variant" id="VAR_045921" description="In AAT6; dbSNP:rs121434527." evidence="6 7">
    <original>R</original>
    <variation>H</variation>
    <location>
        <position position="258"/>
    </location>
</feature>
<feature type="sequence variant" id="VAR_045922" description="In AAT6." evidence="6">
    <original>R</original>
    <variation>G</variation>
    <location>
        <position position="292"/>
    </location>
</feature>
<feature type="sequence variant" id="VAR_011945" description="In dbSNP:rs1803027.">
    <original>T</original>
    <variation>A</variation>
    <location>
        <position position="320"/>
    </location>
</feature>
<feature type="sequence variant" id="VAR_062581" description="In AAT6; dbSNP:rs777832794." evidence="7">
    <original>T</original>
    <variation>N</variation>
    <location>
        <position position="326"/>
    </location>
</feature>
<feature type="sequence variant" id="VAR_045923" description="In AAT6." evidence="6 7">
    <original>T</original>
    <variation>N</variation>
    <location>
        <position position="353"/>
    </location>
</feature>
<feature type="sequence variant" id="VAR_011946" description="In dbSNP:rs1062398.">
    <original>H</original>
    <variation>P</variation>
    <location>
        <position position="373"/>
    </location>
</feature>
<feature type="sequence conflict" description="In Ref. 2; AAA51577." evidence="13" ref="2">
    <original>S</original>
    <variation>W</variation>
    <location>
        <position position="234"/>
    </location>
</feature>
<sequence>MCEEEDSTALVCDNGSGLCKAGFAGDDAPRAVFPSIVGRPRHQGVMVGMGQKDSYVGDEAQSKRGILTLKYPIEHGIITNWDDMEKIWHHSFYNELRVAPEEHPTLLTEAPLNPKANREKMTQIMFETFNVPAMYVAIQAVLSLYASGRTTGIVLDSGDGVTHNVPIYEGYALPHAIMRLDLAGRDLTDYLMKILTERGYSFVTTAEREIVRDIKEKLCYVALDFENEMATAASSSSLEKSYELPDGQVITIGNERFRCPETLFQPSFIGMESAGIHETTYNSIMKCDIDIRKDLYANNVLSGGTTMYPGIADRMQKEITALAPSTMKIKIIAPPERKYSVWIGGSILASLSTFQQMWISKQEYDEAGPSIVHRKCF</sequence>
<protein>
    <recommendedName>
        <fullName>Actin, aortic smooth muscle</fullName>
        <ecNumber evidence="4">3.6.4.-</ecNumber>
    </recommendedName>
    <alternativeName>
        <fullName>Alpha-actin-2</fullName>
    </alternativeName>
    <alternativeName>
        <fullName>Cell growth-inhibiting gene 46 protein</fullName>
    </alternativeName>
    <component>
        <recommendedName>
            <fullName>Actin, aortic smooth muscle, intermediate form</fullName>
        </recommendedName>
    </component>
</protein>
<gene>
    <name type="primary">ACTA2</name>
    <name type="synonym">ACTSA</name>
    <name type="synonym">ACTVS</name>
    <name type="ORF">GIG46</name>
</gene>
<accession>P62736</accession>
<accession>B2R8A4</accession>
<accession>P03996</accession>
<accession>P04108</accession>
<accession>Q6FI19</accession>
<reference key="1">
    <citation type="journal article" date="1989" name="Nucleic Acids Res.">
        <title>The nucleotide sequence of a human smooth muscle alpha-actin (aortic type) cDNA.</title>
        <authorList>
            <person name="Kamada S."/>
            <person name="Kakunaga T."/>
        </authorList>
    </citation>
    <scope>NUCLEOTIDE SEQUENCE [MRNA]</scope>
</reference>
<reference key="2">
    <citation type="journal article" date="1990" name="J. Biol. Chem.">
        <title>Structure of the human smooth muscle alpha-actin gene. Analysis of a cDNA and 5' upstream region.</title>
        <authorList>
            <person name="Reddy S."/>
            <person name="Ozgur K."/>
            <person name="Lu M."/>
            <person name="Chang W."/>
            <person name="Mohan S.R."/>
            <person name="Kumar C.C."/>
            <person name="Ruley H.E."/>
        </authorList>
    </citation>
    <scope>NUCLEOTIDE SEQUENCE [MRNA]</scope>
</reference>
<reference key="3">
    <citation type="submission" date="2004-07" db="EMBL/GenBank/DDBJ databases">
        <title>Identification of a human cell growth inhibiting gene.</title>
        <authorList>
            <person name="Kim J.W."/>
        </authorList>
    </citation>
    <scope>NUCLEOTIDE SEQUENCE [LARGE SCALE MRNA]</scope>
</reference>
<reference key="4">
    <citation type="submission" date="2004-06" db="EMBL/GenBank/DDBJ databases">
        <title>Cloning of human full open reading frames in Gateway(TM) system entry vector (pDONR201).</title>
        <authorList>
            <person name="Halleck A."/>
            <person name="Ebert L."/>
            <person name="Mkoundinya M."/>
            <person name="Schick M."/>
            <person name="Eisenstein S."/>
            <person name="Neubert P."/>
            <person name="Kstrang K."/>
            <person name="Schatten R."/>
            <person name="Shen B."/>
            <person name="Henze S."/>
            <person name="Mar W."/>
            <person name="Korn B."/>
            <person name="Zuo D."/>
            <person name="Hu Y."/>
            <person name="LaBaer J."/>
        </authorList>
    </citation>
    <scope>NUCLEOTIDE SEQUENCE [LARGE SCALE MRNA]</scope>
</reference>
<reference key="5">
    <citation type="journal article" date="2004" name="Nat. Genet.">
        <title>Complete sequencing and characterization of 21,243 full-length human cDNAs.</title>
        <authorList>
            <person name="Ota T."/>
            <person name="Suzuki Y."/>
            <person name="Nishikawa T."/>
            <person name="Otsuki T."/>
            <person name="Sugiyama T."/>
            <person name="Irie R."/>
            <person name="Wakamatsu A."/>
            <person name="Hayashi K."/>
            <person name="Sato H."/>
            <person name="Nagai K."/>
            <person name="Kimura K."/>
            <person name="Makita H."/>
            <person name="Sekine M."/>
            <person name="Obayashi M."/>
            <person name="Nishi T."/>
            <person name="Shibahara T."/>
            <person name="Tanaka T."/>
            <person name="Ishii S."/>
            <person name="Yamamoto J."/>
            <person name="Saito K."/>
            <person name="Kawai Y."/>
            <person name="Isono Y."/>
            <person name="Nakamura Y."/>
            <person name="Nagahari K."/>
            <person name="Murakami K."/>
            <person name="Yasuda T."/>
            <person name="Iwayanagi T."/>
            <person name="Wagatsuma M."/>
            <person name="Shiratori A."/>
            <person name="Sudo H."/>
            <person name="Hosoiri T."/>
            <person name="Kaku Y."/>
            <person name="Kodaira H."/>
            <person name="Kondo H."/>
            <person name="Sugawara M."/>
            <person name="Takahashi M."/>
            <person name="Kanda K."/>
            <person name="Yokoi T."/>
            <person name="Furuya T."/>
            <person name="Kikkawa E."/>
            <person name="Omura Y."/>
            <person name="Abe K."/>
            <person name="Kamihara K."/>
            <person name="Katsuta N."/>
            <person name="Sato K."/>
            <person name="Tanikawa M."/>
            <person name="Yamazaki M."/>
            <person name="Ninomiya K."/>
            <person name="Ishibashi T."/>
            <person name="Yamashita H."/>
            <person name="Murakawa K."/>
            <person name="Fujimori K."/>
            <person name="Tanai H."/>
            <person name="Kimata M."/>
            <person name="Watanabe M."/>
            <person name="Hiraoka S."/>
            <person name="Chiba Y."/>
            <person name="Ishida S."/>
            <person name="Ono Y."/>
            <person name="Takiguchi S."/>
            <person name="Watanabe S."/>
            <person name="Yosida M."/>
            <person name="Hotuta T."/>
            <person name="Kusano J."/>
            <person name="Kanehori K."/>
            <person name="Takahashi-Fujii A."/>
            <person name="Hara H."/>
            <person name="Tanase T.-O."/>
            <person name="Nomura Y."/>
            <person name="Togiya S."/>
            <person name="Komai F."/>
            <person name="Hara R."/>
            <person name="Takeuchi K."/>
            <person name="Arita M."/>
            <person name="Imose N."/>
            <person name="Musashino K."/>
            <person name="Yuuki H."/>
            <person name="Oshima A."/>
            <person name="Sasaki N."/>
            <person name="Aotsuka S."/>
            <person name="Yoshikawa Y."/>
            <person name="Matsunawa H."/>
            <person name="Ichihara T."/>
            <person name="Shiohata N."/>
            <person name="Sano S."/>
            <person name="Moriya S."/>
            <person name="Momiyama H."/>
            <person name="Satoh N."/>
            <person name="Takami S."/>
            <person name="Terashima Y."/>
            <person name="Suzuki O."/>
            <person name="Nakagawa S."/>
            <person name="Senoh A."/>
            <person name="Mizoguchi H."/>
            <person name="Goto Y."/>
            <person name="Shimizu F."/>
            <person name="Wakebe H."/>
            <person name="Hishigaki H."/>
            <person name="Watanabe T."/>
            <person name="Sugiyama A."/>
            <person name="Takemoto M."/>
            <person name="Kawakami B."/>
            <person name="Yamazaki M."/>
            <person name="Watanabe K."/>
            <person name="Kumagai A."/>
            <person name="Itakura S."/>
            <person name="Fukuzumi Y."/>
            <person name="Fujimori Y."/>
            <person name="Komiyama M."/>
            <person name="Tashiro H."/>
            <person name="Tanigami A."/>
            <person name="Fujiwara T."/>
            <person name="Ono T."/>
            <person name="Yamada K."/>
            <person name="Fujii Y."/>
            <person name="Ozaki K."/>
            <person name="Hirao M."/>
            <person name="Ohmori Y."/>
            <person name="Kawabata A."/>
            <person name="Hikiji T."/>
            <person name="Kobatake N."/>
            <person name="Inagaki H."/>
            <person name="Ikema Y."/>
            <person name="Okamoto S."/>
            <person name="Okitani R."/>
            <person name="Kawakami T."/>
            <person name="Noguchi S."/>
            <person name="Itoh T."/>
            <person name="Shigeta K."/>
            <person name="Senba T."/>
            <person name="Matsumura K."/>
            <person name="Nakajima Y."/>
            <person name="Mizuno T."/>
            <person name="Morinaga M."/>
            <person name="Sasaki M."/>
            <person name="Togashi T."/>
            <person name="Oyama M."/>
            <person name="Hata H."/>
            <person name="Watanabe M."/>
            <person name="Komatsu T."/>
            <person name="Mizushima-Sugano J."/>
            <person name="Satoh T."/>
            <person name="Shirai Y."/>
            <person name="Takahashi Y."/>
            <person name="Nakagawa K."/>
            <person name="Okumura K."/>
            <person name="Nagase T."/>
            <person name="Nomura N."/>
            <person name="Kikuchi H."/>
            <person name="Masuho Y."/>
            <person name="Yamashita R."/>
            <person name="Nakai K."/>
            <person name="Yada T."/>
            <person name="Nakamura Y."/>
            <person name="Ohara O."/>
            <person name="Isogai T."/>
            <person name="Sugano S."/>
        </authorList>
    </citation>
    <scope>NUCLEOTIDE SEQUENCE [LARGE SCALE MRNA]</scope>
    <source>
        <tissue>Skeletal muscle</tissue>
    </source>
</reference>
<reference key="6">
    <citation type="journal article" date="2004" name="Nature">
        <title>The DNA sequence and comparative analysis of human chromosome 10.</title>
        <authorList>
            <person name="Deloukas P."/>
            <person name="Earthrowl M.E."/>
            <person name="Grafham D.V."/>
            <person name="Rubenfield M."/>
            <person name="French L."/>
            <person name="Steward C.A."/>
            <person name="Sims S.K."/>
            <person name="Jones M.C."/>
            <person name="Searle S."/>
            <person name="Scott C."/>
            <person name="Howe K."/>
            <person name="Hunt S.E."/>
            <person name="Andrews T.D."/>
            <person name="Gilbert J.G.R."/>
            <person name="Swarbreck D."/>
            <person name="Ashurst J.L."/>
            <person name="Taylor A."/>
            <person name="Battles J."/>
            <person name="Bird C.P."/>
            <person name="Ainscough R."/>
            <person name="Almeida J.P."/>
            <person name="Ashwell R.I.S."/>
            <person name="Ambrose K.D."/>
            <person name="Babbage A.K."/>
            <person name="Bagguley C.L."/>
            <person name="Bailey J."/>
            <person name="Banerjee R."/>
            <person name="Bates K."/>
            <person name="Beasley H."/>
            <person name="Bray-Allen S."/>
            <person name="Brown A.J."/>
            <person name="Brown J.Y."/>
            <person name="Burford D.C."/>
            <person name="Burrill W."/>
            <person name="Burton J."/>
            <person name="Cahill P."/>
            <person name="Camire D."/>
            <person name="Carter N.P."/>
            <person name="Chapman J.C."/>
            <person name="Clark S.Y."/>
            <person name="Clarke G."/>
            <person name="Clee C.M."/>
            <person name="Clegg S."/>
            <person name="Corby N."/>
            <person name="Coulson A."/>
            <person name="Dhami P."/>
            <person name="Dutta I."/>
            <person name="Dunn M."/>
            <person name="Faulkner L."/>
            <person name="Frankish A."/>
            <person name="Frankland J.A."/>
            <person name="Garner P."/>
            <person name="Garnett J."/>
            <person name="Gribble S."/>
            <person name="Griffiths C."/>
            <person name="Grocock R."/>
            <person name="Gustafson E."/>
            <person name="Hammond S."/>
            <person name="Harley J.L."/>
            <person name="Hart E."/>
            <person name="Heath P.D."/>
            <person name="Ho T.P."/>
            <person name="Hopkins B."/>
            <person name="Horne J."/>
            <person name="Howden P.J."/>
            <person name="Huckle E."/>
            <person name="Hynds C."/>
            <person name="Johnson C."/>
            <person name="Johnson D."/>
            <person name="Kana A."/>
            <person name="Kay M."/>
            <person name="Kimberley A.M."/>
            <person name="Kershaw J.K."/>
            <person name="Kokkinaki M."/>
            <person name="Laird G.K."/>
            <person name="Lawlor S."/>
            <person name="Lee H.M."/>
            <person name="Leongamornlert D.A."/>
            <person name="Laird G."/>
            <person name="Lloyd C."/>
            <person name="Lloyd D.M."/>
            <person name="Loveland J."/>
            <person name="Lovell J."/>
            <person name="McLaren S."/>
            <person name="McLay K.E."/>
            <person name="McMurray A."/>
            <person name="Mashreghi-Mohammadi M."/>
            <person name="Matthews L."/>
            <person name="Milne S."/>
            <person name="Nickerson T."/>
            <person name="Nguyen M."/>
            <person name="Overton-Larty E."/>
            <person name="Palmer S.A."/>
            <person name="Pearce A.V."/>
            <person name="Peck A.I."/>
            <person name="Pelan S."/>
            <person name="Phillimore B."/>
            <person name="Porter K."/>
            <person name="Rice C.M."/>
            <person name="Rogosin A."/>
            <person name="Ross M.T."/>
            <person name="Sarafidou T."/>
            <person name="Sehra H.K."/>
            <person name="Shownkeen R."/>
            <person name="Skuce C.D."/>
            <person name="Smith M."/>
            <person name="Standring L."/>
            <person name="Sycamore N."/>
            <person name="Tester J."/>
            <person name="Thorpe A."/>
            <person name="Torcasso W."/>
            <person name="Tracey A."/>
            <person name="Tromans A."/>
            <person name="Tsolas J."/>
            <person name="Wall M."/>
            <person name="Walsh J."/>
            <person name="Wang H."/>
            <person name="Weinstock K."/>
            <person name="West A.P."/>
            <person name="Willey D.L."/>
            <person name="Whitehead S.L."/>
            <person name="Wilming L."/>
            <person name="Wray P.W."/>
            <person name="Young L."/>
            <person name="Chen Y."/>
            <person name="Lovering R.C."/>
            <person name="Moschonas N.K."/>
            <person name="Siebert R."/>
            <person name="Fechtel K."/>
            <person name="Bentley D."/>
            <person name="Durbin R.M."/>
            <person name="Hubbard T."/>
            <person name="Doucette-Stamm L."/>
            <person name="Beck S."/>
            <person name="Smith D.R."/>
            <person name="Rogers J."/>
        </authorList>
    </citation>
    <scope>NUCLEOTIDE SEQUENCE [LARGE SCALE GENOMIC DNA]</scope>
</reference>
<reference key="7">
    <citation type="submission" date="2005-09" db="EMBL/GenBank/DDBJ databases">
        <authorList>
            <person name="Mural R.J."/>
            <person name="Istrail S."/>
            <person name="Sutton G.G."/>
            <person name="Florea L."/>
            <person name="Halpern A.L."/>
            <person name="Mobarry C.M."/>
            <person name="Lippert R."/>
            <person name="Walenz B."/>
            <person name="Shatkay H."/>
            <person name="Dew I."/>
            <person name="Miller J.R."/>
            <person name="Flanigan M.J."/>
            <person name="Edwards N.J."/>
            <person name="Bolanos R."/>
            <person name="Fasulo D."/>
            <person name="Halldorsson B.V."/>
            <person name="Hannenhalli S."/>
            <person name="Turner R."/>
            <person name="Yooseph S."/>
            <person name="Lu F."/>
            <person name="Nusskern D.R."/>
            <person name="Shue B.C."/>
            <person name="Zheng X.H."/>
            <person name="Zhong F."/>
            <person name="Delcher A.L."/>
            <person name="Huson D.H."/>
            <person name="Kravitz S.A."/>
            <person name="Mouchard L."/>
            <person name="Reinert K."/>
            <person name="Remington K.A."/>
            <person name="Clark A.G."/>
            <person name="Waterman M.S."/>
            <person name="Eichler E.E."/>
            <person name="Adams M.D."/>
            <person name="Hunkapiller M.W."/>
            <person name="Myers E.W."/>
            <person name="Venter J.C."/>
        </authorList>
    </citation>
    <scope>NUCLEOTIDE SEQUENCE [LARGE SCALE GENOMIC DNA]</scope>
</reference>
<reference key="8">
    <citation type="journal article" date="2004" name="Genome Res.">
        <title>The status, quality, and expansion of the NIH full-length cDNA project: the Mammalian Gene Collection (MGC).</title>
        <authorList>
            <consortium name="The MGC Project Team"/>
        </authorList>
    </citation>
    <scope>NUCLEOTIDE SEQUENCE [LARGE SCALE MRNA]</scope>
    <source>
        <tissue>Uterus</tissue>
    </source>
</reference>
<reference key="9">
    <citation type="journal article" date="1984" name="Mol. Cell. Biol.">
        <title>Structure of a human smooth muscle actin gene (aortic type) with a unique intron site.</title>
        <authorList>
            <person name="Ueyama H."/>
            <person name="Hamada H."/>
            <person name="Battula N."/>
            <person name="Kakunaga T."/>
        </authorList>
    </citation>
    <scope>NUCLEOTIDE SEQUENCE [GENOMIC DNA] OF 1-330</scope>
</reference>
<reference key="10">
    <citation type="journal article" date="1989" name="Gene">
        <title>Structure of 3'-downstream segment of the human smooth muscle (aortic-type) alpha-actin-encoding gene and isolation of the specific DNA probe.</title>
        <authorList>
            <person name="Kamada S."/>
            <person name="Nakano Y."/>
            <person name="Kakunaga T."/>
        </authorList>
    </citation>
    <scope>NUCLEOTIDE SEQUENCE [GENOMIC DNA] OF 331-377</scope>
</reference>
<reference key="11">
    <citation type="journal article" date="2006" name="Cell. Microbiol.">
        <title>Transcriptomic and proteomic analyses of rhabdomyosarcoma cells reveal differential cellular gene expression in response to enterovirus 71 infection.</title>
        <authorList>
            <person name="Leong W.F."/>
            <person name="Chow V.T."/>
        </authorList>
    </citation>
    <scope>INDUCTION</scope>
    <scope>IDENTIFICATION BY MASS SPECTROMETRY</scope>
</reference>
<reference key="12">
    <citation type="journal article" date="2008" name="Proc. Natl. Acad. Sci. U.S.A.">
        <title>Connecting actin monomers by iso-peptide bond is a toxicity mechanism of the Vibrio cholerae MARTX toxin.</title>
        <authorList>
            <person name="Kudryashov D.S."/>
            <person name="Durer Z.A."/>
            <person name="Ytterberg A.J."/>
            <person name="Sawaya M.R."/>
            <person name="Pashkov I."/>
            <person name="Prochazkova K."/>
            <person name="Yeates T.O."/>
            <person name="Loo R.R."/>
            <person name="Loo J.A."/>
            <person name="Satchell K.J."/>
            <person name="Reisler E."/>
        </authorList>
    </citation>
    <scope>CROSS-LINK BY V.CHOLERAE TOXIN RTXA (MICROBIAL INFECTION)</scope>
</reference>
<reference key="13">
    <citation type="journal article" date="2012" name="Mol. Cell. Proteomics">
        <title>Comparative large-scale characterisation of plant vs. mammal proteins reveals similar and idiosyncratic N-alpha acetylation features.</title>
        <authorList>
            <person name="Bienvenut W.V."/>
            <person name="Sumpton D."/>
            <person name="Martinez A."/>
            <person name="Lilla S."/>
            <person name="Espagne C."/>
            <person name="Meinnel T."/>
            <person name="Giglione C."/>
        </authorList>
    </citation>
    <scope>ACETYLATION [LARGE SCALE ANALYSIS] AT GLU-3</scope>
    <scope>IDENTIFICATION BY MASS SPECTROMETRY [LARGE SCALE ANALYSIS]</scope>
</reference>
<reference key="14">
    <citation type="journal article" date="2012" name="Proc. Natl. Acad. Sci. U.S.A.">
        <title>N-terminal acetylome analyses and functional insights of the N-terminal acetyltransferase NatB.</title>
        <authorList>
            <person name="Van Damme P."/>
            <person name="Lasa M."/>
            <person name="Polevoda B."/>
            <person name="Gazquez C."/>
            <person name="Elosegui-Artola A."/>
            <person name="Kim D.S."/>
            <person name="De Juan-Pardo E."/>
            <person name="Demeyer K."/>
            <person name="Hole K."/>
            <person name="Larrea E."/>
            <person name="Timmerman E."/>
            <person name="Prieto J."/>
            <person name="Arnesen T."/>
            <person name="Sherman F."/>
            <person name="Gevaert K."/>
            <person name="Aldabe R."/>
        </authorList>
    </citation>
    <scope>IDENTIFICATION BY MASS SPECTROMETRY [LARGE SCALE ANALYSIS]</scope>
</reference>
<reference key="15">
    <citation type="journal article" date="2015" name="Science">
        <title>ACD toxin-produced actin oligomers poison formin-controlled actin polymerization.</title>
        <authorList>
            <person name="Heisler D.B."/>
            <person name="Kudryashova E."/>
            <person name="Grinevich D.O."/>
            <person name="Suarez C."/>
            <person name="Winkelman J.D."/>
            <person name="Birukov K.G."/>
            <person name="Kotha S.R."/>
            <person name="Parinandi N.L."/>
            <person name="Vavylonis D."/>
            <person name="Kovar D.R."/>
            <person name="Kudryashov D.S."/>
        </authorList>
    </citation>
    <scope>CROSS-LINK BY V.CHOLERAE TOXIN RTXA (MICROBIAL INFECTION)</scope>
</reference>
<reference key="16">
    <citation type="journal article" date="2019" name="Nature">
        <title>SETD3 is an actin histidine methyltransferase that prevents primary dystocia.</title>
        <authorList>
            <person name="Wilkinson A.W."/>
            <person name="Diep J."/>
            <person name="Dai S."/>
            <person name="Liu S."/>
            <person name="Ooi Y.S."/>
            <person name="Song D."/>
            <person name="Li T.M."/>
            <person name="Horton J.R."/>
            <person name="Zhang X."/>
            <person name="Liu C."/>
            <person name="Trivedi D.V."/>
            <person name="Ruppel K.M."/>
            <person name="Vilches-Moure J.G."/>
            <person name="Casey K.M."/>
            <person name="Mak J."/>
            <person name="Cowan T."/>
            <person name="Elias J.E."/>
            <person name="Nagamine C.M."/>
            <person name="Spudich J.A."/>
            <person name="Cheng X."/>
            <person name="Carette J.E."/>
            <person name="Gozani O."/>
        </authorList>
    </citation>
    <scope>METHYLATION AT HIS-75</scope>
</reference>
<reference key="17">
    <citation type="journal article" date="2007" name="Nat. Genet.">
        <title>Mutations in smooth muscle alpha-actin (ACTA2) lead to thoracic aortic aneurysms and dissections.</title>
        <authorList>
            <person name="Guo D.-C."/>
            <person name="Pannu H."/>
            <person name="Tran-Fadulu V."/>
            <person name="Papke C.L."/>
            <person name="Yu R.K."/>
            <person name="Avidan N."/>
            <person name="Bourgeois S."/>
            <person name="Estrera A.L."/>
            <person name="Safi H.J."/>
            <person name="Sparks E."/>
            <person name="Amor D."/>
            <person name="Ades L."/>
            <person name="McConnell V."/>
            <person name="Willoughby C.E."/>
            <person name="Abuelo D."/>
            <person name="Willing M."/>
            <person name="Lewis R.A."/>
            <person name="Kim D.H."/>
            <person name="Scherer S."/>
            <person name="Tung P.P."/>
            <person name="Ahn C."/>
            <person name="Buja L.M."/>
            <person name="Raman C.S."/>
            <person name="Shete S.S."/>
            <person name="Milewicz D.M."/>
        </authorList>
    </citation>
    <scope>VARIANTS AAT6 THR-117; GLN-118; HIS-135; CYS-149; ALA-154; CYS-258; HIS-258; GLY-292 AND ASN-353</scope>
</reference>
<reference key="18">
    <citation type="journal article" date="2009" name="Am. J. Hum. Genet.">
        <title>Mutations in smooth muscle alpha-actin (ACTA2) cause coronary artery disease, stroke, and Moyamoya disease, along with thoracic aortic disease.</title>
        <authorList>
            <person name="Guo D.-C."/>
            <person name="Papke C.L."/>
            <person name="Tran-Fadulu V."/>
            <person name="Regalado E.S."/>
            <person name="Avidan N."/>
            <person name="Johnson R.J."/>
            <person name="Kim D.H."/>
            <person name="Pannu H."/>
            <person name="Willing M.C."/>
            <person name="Sparks E."/>
            <person name="Pyeritz R.E."/>
            <person name="Singh M.N."/>
            <person name="Dalman R.L."/>
            <person name="Grotta J.C."/>
            <person name="Marian A.J."/>
            <person name="Boerwinkle E.A."/>
            <person name="Frazier L.Q."/>
            <person name="LeMaire S.A."/>
            <person name="Coselli J.S."/>
            <person name="Estrera A.L."/>
            <person name="Safi H.J."/>
            <person name="Veeraraghavan S."/>
            <person name="Muzny D.M."/>
            <person name="Wheeler D.A."/>
            <person name="Willerson J.T."/>
            <person name="Yu R.K."/>
            <person name="Shete S.S."/>
            <person name="Scherer S.E."/>
            <person name="Raman C.S."/>
            <person name="Buja L.M."/>
            <person name="Milewicz D.M."/>
        </authorList>
    </citation>
    <scope>VARIANTS AAT6 HIS-39; THR-117; GLN-118; CYS-149; ALA-154; GLN-185; GLN-212; HIS-258; CYS-258; ASN-326 AND ASN-353</scope>
</reference>
<reference key="19">
    <citation type="journal article" date="2009" name="Hum. Mutat.">
        <title>Mutation of ACTA2 gene as an important cause of familial and nonfamilial nonsyndromatic thoracic aortic aneurysm and/or dissection (TAAD).</title>
        <authorList>
            <person name="Morisaki H."/>
            <person name="Akutsu K."/>
            <person name="Ogino H."/>
            <person name="Kondo N."/>
            <person name="Yamanaka I."/>
            <person name="Tsutsumi Y."/>
            <person name="Yoshimuta T."/>
            <person name="Okajima T."/>
            <person name="Matsuda H."/>
            <person name="Minatoya K."/>
            <person name="Sasaki H."/>
            <person name="Tanaka H."/>
            <person name="Ishibashi-Ueda H."/>
            <person name="Morisaki T."/>
        </authorList>
    </citation>
    <scope>VARIANTS AAT6 CYS-145; CYS-149 AND GLN-212</scope>
    <scope>PREDISPOSITION TO A VARIETY OF VASCULAR DISEASES</scope>
</reference>
<reference key="20">
    <citation type="journal article" date="2010" name="Am. J. Med. Genet. A">
        <title>De novo ACTA2 mutation causes a novel syndrome of multisystemic smooth muscle dysfunction.</title>
        <authorList>
            <person name="Milewicz D.M."/>
            <person name="Ostergaard J.R."/>
            <person name="Ala-Kokko L.M."/>
            <person name="Khan N."/>
            <person name="Grange D.K."/>
            <person name="Mendoza-Londono R."/>
            <person name="Bradley T.J."/>
            <person name="Olney A.H."/>
            <person name="Ades L."/>
            <person name="Maher J.F."/>
            <person name="Guo D."/>
            <person name="Buja L.M."/>
            <person name="Kim D."/>
            <person name="Hyland J.C."/>
            <person name="Regalado E.S."/>
        </authorList>
    </citation>
    <scope>VARIANT SMDYS HIS-179</scope>
</reference>
<reference key="21">
    <citation type="journal article" date="2011" name="Eur. J. Paediatr. Neurol.">
        <title>Analysis of ACTA2 in European Moyamoya disease patients.</title>
        <authorList>
            <person name="Roder C."/>
            <person name="Peters V."/>
            <person name="Kasuya H."/>
            <person name="Nishizawa T."/>
            <person name="Wakita S."/>
            <person name="Berg D."/>
            <person name="Schulte C."/>
            <person name="Khan N."/>
            <person name="Tatagiba M."/>
            <person name="Krischek B."/>
        </authorList>
    </citation>
    <scope>VARIANT MYMY5 HIS-179</scope>
</reference>
<reference key="22">
    <citation type="journal article" date="2016" name="Am. J. Med. Genet. A">
        <title>Visceral myopathy: Clinical and molecular survey of a cohort of seven new patients and state of the art of overlapping phenotypes.</title>
        <authorList>
            <person name="Moreno C.A."/>
            <person name="Metze K."/>
            <person name="Lomazi E.A."/>
            <person name="Bertola D.R."/>
            <person name="Barbosa R.H."/>
            <person name="Cosentino V."/>
            <person name="Sobreira N."/>
            <person name="Cavalcanti D.P."/>
        </authorList>
    </citation>
    <scope>VARIANT SMDYS CYS-179</scope>
</reference>
<dbReference type="EC" id="3.6.4.-" evidence="4"/>
<dbReference type="EMBL" id="X13839">
    <property type="protein sequence ID" value="CAA32064.1"/>
    <property type="molecule type" value="mRNA"/>
</dbReference>
<dbReference type="EMBL" id="J05192">
    <property type="protein sequence ID" value="AAA51577.1"/>
    <property type="molecule type" value="mRNA"/>
</dbReference>
<dbReference type="EMBL" id="AY692464">
    <property type="protein sequence ID" value="AAW29811.1"/>
    <property type="molecule type" value="mRNA"/>
</dbReference>
<dbReference type="EMBL" id="CR536518">
    <property type="protein sequence ID" value="CAG38756.1"/>
    <property type="molecule type" value="mRNA"/>
</dbReference>
<dbReference type="EMBL" id="AK313294">
    <property type="protein sequence ID" value="BAG36101.1"/>
    <property type="molecule type" value="mRNA"/>
</dbReference>
<dbReference type="EMBL" id="AL157394">
    <property type="status" value="NOT_ANNOTATED_CDS"/>
    <property type="molecule type" value="Genomic_DNA"/>
</dbReference>
<dbReference type="EMBL" id="CH471066">
    <property type="protein sequence ID" value="EAW50153.1"/>
    <property type="molecule type" value="Genomic_DNA"/>
</dbReference>
<dbReference type="EMBL" id="BC017554">
    <property type="protein sequence ID" value="AAH17554.1"/>
    <property type="molecule type" value="mRNA"/>
</dbReference>
<dbReference type="EMBL" id="BC093052">
    <property type="protein sequence ID" value="AAH93052.1"/>
    <property type="molecule type" value="mRNA"/>
</dbReference>
<dbReference type="EMBL" id="K01741">
    <property type="status" value="NOT_ANNOTATED_CDS"/>
    <property type="molecule type" value="Genomic_DNA"/>
</dbReference>
<dbReference type="EMBL" id="K01742">
    <property type="status" value="NOT_ANNOTATED_CDS"/>
    <property type="molecule type" value="Genomic_DNA"/>
</dbReference>
<dbReference type="EMBL" id="K01743">
    <property type="status" value="NOT_ANNOTATED_CDS"/>
    <property type="molecule type" value="Genomic_DNA"/>
</dbReference>
<dbReference type="EMBL" id="M33216">
    <property type="protein sequence ID" value="AAA60560.1"/>
    <property type="molecule type" value="Genomic_DNA"/>
</dbReference>
<dbReference type="CCDS" id="CCDS7392.1"/>
<dbReference type="PIR" id="A35020">
    <property type="entry name" value="ATHUSM"/>
</dbReference>
<dbReference type="RefSeq" id="NP_001135417.1">
    <property type="nucleotide sequence ID" value="NM_001141945.3"/>
</dbReference>
<dbReference type="RefSeq" id="NP_001307784.1">
    <property type="nucleotide sequence ID" value="NM_001320855.2"/>
</dbReference>
<dbReference type="RefSeq" id="NP_001393391.1">
    <property type="nucleotide sequence ID" value="NM_001406462.1"/>
</dbReference>
<dbReference type="RefSeq" id="NP_001393392.1">
    <property type="nucleotide sequence ID" value="NM_001406463.1"/>
</dbReference>
<dbReference type="RefSeq" id="NP_001393393.1">
    <property type="nucleotide sequence ID" value="NM_001406464.1"/>
</dbReference>
<dbReference type="RefSeq" id="NP_001604.1">
    <property type="nucleotide sequence ID" value="NM_001613.4"/>
</dbReference>
<dbReference type="EMDB" id="EMD-35888"/>
<dbReference type="SMR" id="P62736"/>
<dbReference type="BioGRID" id="106574">
    <property type="interactions" value="555"/>
</dbReference>
<dbReference type="CORUM" id="P62736"/>
<dbReference type="ELM" id="P62736"/>
<dbReference type="FunCoup" id="P62736">
    <property type="interactions" value="597"/>
</dbReference>
<dbReference type="IntAct" id="P62736">
    <property type="interactions" value="225"/>
</dbReference>
<dbReference type="MINT" id="P62736"/>
<dbReference type="STRING" id="9606.ENSP00000224784"/>
<dbReference type="DrugBank" id="DB12695">
    <property type="generic name" value="Phenethyl Isothiocyanate"/>
</dbReference>
<dbReference type="GlyCosmos" id="P62736">
    <property type="glycosylation" value="1 site, 2 glycans"/>
</dbReference>
<dbReference type="GlyGen" id="P62736">
    <property type="glycosylation" value="2 sites, 1 N-linked glycan (1 site), 2 O-linked glycans (1 site)"/>
</dbReference>
<dbReference type="iPTMnet" id="P62736"/>
<dbReference type="MetOSite" id="P62736"/>
<dbReference type="PhosphoSitePlus" id="P62736"/>
<dbReference type="SwissPalm" id="P62736"/>
<dbReference type="BioMuta" id="ACTA2"/>
<dbReference type="DMDM" id="51316972"/>
<dbReference type="REPRODUCTION-2DPAGE" id="IPI00008603"/>
<dbReference type="jPOST" id="P62736"/>
<dbReference type="MassIVE" id="P62736"/>
<dbReference type="PaxDb" id="9606-ENSP00000402373"/>
<dbReference type="PeptideAtlas" id="P62736"/>
<dbReference type="PRIDE" id="P62736"/>
<dbReference type="ProteomicsDB" id="57419"/>
<dbReference type="Pumba" id="P62736"/>
<dbReference type="TopDownProteomics" id="P62736"/>
<dbReference type="Antibodypedia" id="30207">
    <property type="antibodies" value="1558 antibodies from 52 providers"/>
</dbReference>
<dbReference type="DNASU" id="59"/>
<dbReference type="Ensembl" id="ENST00000224784.10">
    <property type="protein sequence ID" value="ENSP00000224784.6"/>
    <property type="gene ID" value="ENSG00000107796.14"/>
</dbReference>
<dbReference type="Ensembl" id="ENST00000415557.2">
    <property type="protein sequence ID" value="ENSP00000396730.2"/>
    <property type="gene ID" value="ENSG00000107796.14"/>
</dbReference>
<dbReference type="Ensembl" id="ENST00000458159.6">
    <property type="protein sequence ID" value="ENSP00000398239.2"/>
    <property type="gene ID" value="ENSG00000107796.14"/>
</dbReference>
<dbReference type="Ensembl" id="ENST00000713597.1">
    <property type="protein sequence ID" value="ENSP00000518893.1"/>
    <property type="gene ID" value="ENSG00000107796.14"/>
</dbReference>
<dbReference type="Ensembl" id="ENST00000713599.1">
    <property type="protein sequence ID" value="ENSP00000518895.1"/>
    <property type="gene ID" value="ENSG00000107796.14"/>
</dbReference>
<dbReference type="Ensembl" id="ENST00000713602.1">
    <property type="protein sequence ID" value="ENSP00000518898.1"/>
    <property type="gene ID" value="ENSG00000107796.14"/>
</dbReference>
<dbReference type="GeneID" id="59"/>
<dbReference type="KEGG" id="hsa:59"/>
<dbReference type="MANE-Select" id="ENST00000224784.10">
    <property type="protein sequence ID" value="ENSP00000224784.6"/>
    <property type="RefSeq nucleotide sequence ID" value="NM_001613.4"/>
    <property type="RefSeq protein sequence ID" value="NP_001604.1"/>
</dbReference>
<dbReference type="UCSC" id="uc001kfp.4">
    <property type="organism name" value="human"/>
</dbReference>
<dbReference type="AGR" id="HGNC:130"/>
<dbReference type="CTD" id="59"/>
<dbReference type="DisGeNET" id="59"/>
<dbReference type="GeneCards" id="ACTA2"/>
<dbReference type="GeneReviews" id="ACTA2"/>
<dbReference type="HGNC" id="HGNC:130">
    <property type="gene designation" value="ACTA2"/>
</dbReference>
<dbReference type="HPA" id="ENSG00000107796">
    <property type="expression patterns" value="Tissue enhanced (endometrium, seminal vesicle, smooth muscle)"/>
</dbReference>
<dbReference type="MalaCards" id="ACTA2"/>
<dbReference type="MIM" id="102620">
    <property type="type" value="gene"/>
</dbReference>
<dbReference type="MIM" id="611788">
    <property type="type" value="phenotype"/>
</dbReference>
<dbReference type="MIM" id="613834">
    <property type="type" value="phenotype"/>
</dbReference>
<dbReference type="MIM" id="614042">
    <property type="type" value="phenotype"/>
</dbReference>
<dbReference type="neXtProt" id="NX_P62736"/>
<dbReference type="OpenTargets" id="ENSG00000107796"/>
<dbReference type="Orphanet" id="91387">
    <property type="disease" value="Familial thoracic aortic aneurysm and aortic dissection"/>
</dbReference>
<dbReference type="Orphanet" id="2573">
    <property type="disease" value="Moyamoya disease"/>
</dbReference>
<dbReference type="Orphanet" id="404463">
    <property type="disease" value="Multisystemic smooth muscle dysfunction syndrome"/>
</dbReference>
<dbReference type="PharmGKB" id="PA24456"/>
<dbReference type="VEuPathDB" id="HostDB:ENSG00000107796"/>
<dbReference type="eggNOG" id="KOG0676">
    <property type="taxonomic scope" value="Eukaryota"/>
</dbReference>
<dbReference type="GeneTree" id="ENSGT00940000154148"/>
<dbReference type="HOGENOM" id="CLU_027965_0_2_1"/>
<dbReference type="InParanoid" id="P62736"/>
<dbReference type="OMA" id="THNTIHA"/>
<dbReference type="OrthoDB" id="9816491at2759"/>
<dbReference type="PAN-GO" id="P62736">
    <property type="GO annotations" value="3 GO annotations based on evolutionary models"/>
</dbReference>
<dbReference type="PhylomeDB" id="P62736"/>
<dbReference type="TreeFam" id="TF354237"/>
<dbReference type="PathwayCommons" id="P62736"/>
<dbReference type="Reactome" id="R-HSA-445355">
    <property type="pathway name" value="Smooth Muscle Contraction"/>
</dbReference>
<dbReference type="Reactome" id="R-HSA-9013695">
    <property type="pathway name" value="NOTCH4 Intracellular Domain Regulates Transcription"/>
</dbReference>
<dbReference type="Reactome" id="R-HSA-9913351">
    <property type="pathway name" value="Formation of the dystrophin-glycoprotein complex (DGC)"/>
</dbReference>
<dbReference type="SignaLink" id="P62736"/>
<dbReference type="SIGNOR" id="P62736"/>
<dbReference type="BioGRID-ORCS" id="59">
    <property type="hits" value="15 hits in 1146 CRISPR screens"/>
</dbReference>
<dbReference type="ChiTaRS" id="ACTA2">
    <property type="organism name" value="human"/>
</dbReference>
<dbReference type="GeneWiki" id="ACTA2"/>
<dbReference type="GenomeRNAi" id="59"/>
<dbReference type="Pharos" id="P62736">
    <property type="development level" value="Tbio"/>
</dbReference>
<dbReference type="PRO" id="PR:P62736"/>
<dbReference type="Proteomes" id="UP000005640">
    <property type="component" value="Chromosome 10"/>
</dbReference>
<dbReference type="RNAct" id="P62736">
    <property type="molecule type" value="protein"/>
</dbReference>
<dbReference type="Bgee" id="ENSG00000107796">
    <property type="expression patterns" value="Expressed in saphenous vein and 213 other cell types or tissues"/>
</dbReference>
<dbReference type="ExpressionAtlas" id="P62736">
    <property type="expression patterns" value="baseline and differential"/>
</dbReference>
<dbReference type="GO" id="GO:0015629">
    <property type="term" value="C:actin cytoskeleton"/>
    <property type="evidence" value="ECO:0000318"/>
    <property type="project" value="GO_Central"/>
</dbReference>
<dbReference type="GO" id="GO:0005604">
    <property type="term" value="C:basement membrane"/>
    <property type="evidence" value="ECO:0007669"/>
    <property type="project" value="Ensembl"/>
</dbReference>
<dbReference type="GO" id="GO:0044297">
    <property type="term" value="C:cell body"/>
    <property type="evidence" value="ECO:0000250"/>
    <property type="project" value="AgBase"/>
</dbReference>
<dbReference type="GO" id="GO:0005737">
    <property type="term" value="C:cytoplasm"/>
    <property type="evidence" value="ECO:0000314"/>
    <property type="project" value="UniProtKB"/>
</dbReference>
<dbReference type="GO" id="GO:0005829">
    <property type="term" value="C:cytosol"/>
    <property type="evidence" value="ECO:0000304"/>
    <property type="project" value="Reactome"/>
</dbReference>
<dbReference type="GO" id="GO:0070062">
    <property type="term" value="C:extracellular exosome"/>
    <property type="evidence" value="ECO:0007005"/>
    <property type="project" value="UniProtKB"/>
</dbReference>
<dbReference type="GO" id="GO:0005615">
    <property type="term" value="C:extracellular space"/>
    <property type="evidence" value="ECO:0007005"/>
    <property type="project" value="UniProtKB"/>
</dbReference>
<dbReference type="GO" id="GO:0030175">
    <property type="term" value="C:filopodium"/>
    <property type="evidence" value="ECO:0000250"/>
    <property type="project" value="AgBase"/>
</dbReference>
<dbReference type="GO" id="GO:0030027">
    <property type="term" value="C:lamellipodium"/>
    <property type="evidence" value="ECO:0000250"/>
    <property type="project" value="AgBase"/>
</dbReference>
<dbReference type="GO" id="GO:0031514">
    <property type="term" value="C:motile cilium"/>
    <property type="evidence" value="ECO:0007669"/>
    <property type="project" value="Ensembl"/>
</dbReference>
<dbReference type="GO" id="GO:0032991">
    <property type="term" value="C:protein-containing complex"/>
    <property type="evidence" value="ECO:0000314"/>
    <property type="project" value="MGI"/>
</dbReference>
<dbReference type="GO" id="GO:0030485">
    <property type="term" value="C:smooth muscle contractile fiber"/>
    <property type="evidence" value="ECO:0007669"/>
    <property type="project" value="Ensembl"/>
</dbReference>
<dbReference type="GO" id="GO:0001725">
    <property type="term" value="C:stress fiber"/>
    <property type="evidence" value="ECO:0007669"/>
    <property type="project" value="Ensembl"/>
</dbReference>
<dbReference type="GO" id="GO:0005524">
    <property type="term" value="F:ATP binding"/>
    <property type="evidence" value="ECO:0007669"/>
    <property type="project" value="UniProtKB-KW"/>
</dbReference>
<dbReference type="GO" id="GO:0016787">
    <property type="term" value="F:hydrolase activity"/>
    <property type="evidence" value="ECO:0007669"/>
    <property type="project" value="UniProtKB-KW"/>
</dbReference>
<dbReference type="GO" id="GO:0019901">
    <property type="term" value="F:protein kinase binding"/>
    <property type="evidence" value="ECO:0000250"/>
    <property type="project" value="ParkinsonsUK-UCL"/>
</dbReference>
<dbReference type="GO" id="GO:0071560">
    <property type="term" value="P:cellular response to transforming growth factor beta stimulus"/>
    <property type="evidence" value="ECO:0007669"/>
    <property type="project" value="Ensembl"/>
</dbReference>
<dbReference type="GO" id="GO:0072144">
    <property type="term" value="P:glomerular mesangial cell development"/>
    <property type="evidence" value="ECO:0000270"/>
    <property type="project" value="UniProtKB"/>
</dbReference>
<dbReference type="GO" id="GO:0072051">
    <property type="term" value="P:juxtaglomerular apparatus development"/>
    <property type="evidence" value="ECO:0007669"/>
    <property type="project" value="Ensembl"/>
</dbReference>
<dbReference type="GO" id="GO:0090131">
    <property type="term" value="P:mesenchyme migration"/>
    <property type="evidence" value="ECO:0000250"/>
    <property type="project" value="AgBase"/>
</dbReference>
<dbReference type="GO" id="GO:0070374">
    <property type="term" value="P:positive regulation of ERK1 and ERK2 cascade"/>
    <property type="evidence" value="ECO:0007669"/>
    <property type="project" value="Ensembl"/>
</dbReference>
<dbReference type="GO" id="GO:0010628">
    <property type="term" value="P:positive regulation of gene expression"/>
    <property type="evidence" value="ECO:0000250"/>
    <property type="project" value="AgBase"/>
</dbReference>
<dbReference type="GO" id="GO:2000491">
    <property type="term" value="P:positive regulation of hepatic stellate cell activation"/>
    <property type="evidence" value="ECO:0007669"/>
    <property type="project" value="Ensembl"/>
</dbReference>
<dbReference type="GO" id="GO:0061874">
    <property type="term" value="P:positive regulation of hepatic stellate cell contraction"/>
    <property type="evidence" value="ECO:0007669"/>
    <property type="project" value="Ensembl"/>
</dbReference>
<dbReference type="GO" id="GO:0061870">
    <property type="term" value="P:positive regulation of hepatic stellate cell migration"/>
    <property type="evidence" value="ECO:0007669"/>
    <property type="project" value="Ensembl"/>
</dbReference>
<dbReference type="GO" id="GO:0008217">
    <property type="term" value="P:regulation of blood pressure"/>
    <property type="evidence" value="ECO:0007669"/>
    <property type="project" value="Ensembl"/>
</dbReference>
<dbReference type="GO" id="GO:0009615">
    <property type="term" value="P:response to virus"/>
    <property type="evidence" value="ECO:0000270"/>
    <property type="project" value="UniProtKB"/>
</dbReference>
<dbReference type="GO" id="GO:0014829">
    <property type="term" value="P:vascular associated smooth muscle contraction"/>
    <property type="evidence" value="ECO:0007669"/>
    <property type="project" value="Ensembl"/>
</dbReference>
<dbReference type="CDD" id="cd10224">
    <property type="entry name" value="ASKHA_NBD_actin"/>
    <property type="match status" value="1"/>
</dbReference>
<dbReference type="FunFam" id="3.30.420.40:FF:000131">
    <property type="entry name" value="Actin, alpha skeletal muscle"/>
    <property type="match status" value="1"/>
</dbReference>
<dbReference type="FunFam" id="3.30.420.40:FF:000291">
    <property type="entry name" value="Actin, alpha skeletal muscle"/>
    <property type="match status" value="1"/>
</dbReference>
<dbReference type="FunFam" id="3.90.640.10:FF:000047">
    <property type="entry name" value="Actin, alpha skeletal muscle"/>
    <property type="match status" value="1"/>
</dbReference>
<dbReference type="FunFam" id="3.30.420.40:FF:000058">
    <property type="entry name" value="Putative actin-related protein 5"/>
    <property type="match status" value="1"/>
</dbReference>
<dbReference type="Gene3D" id="3.30.420.40">
    <property type="match status" value="2"/>
</dbReference>
<dbReference type="Gene3D" id="3.90.640.10">
    <property type="entry name" value="Actin, Chain A, domain 4"/>
    <property type="match status" value="1"/>
</dbReference>
<dbReference type="InterPro" id="IPR004000">
    <property type="entry name" value="Actin"/>
</dbReference>
<dbReference type="InterPro" id="IPR020902">
    <property type="entry name" value="Actin/actin-like_CS"/>
</dbReference>
<dbReference type="InterPro" id="IPR004001">
    <property type="entry name" value="Actin_CS"/>
</dbReference>
<dbReference type="InterPro" id="IPR043129">
    <property type="entry name" value="ATPase_NBD"/>
</dbReference>
<dbReference type="PANTHER" id="PTHR11937">
    <property type="entry name" value="ACTIN"/>
    <property type="match status" value="1"/>
</dbReference>
<dbReference type="Pfam" id="PF00022">
    <property type="entry name" value="Actin"/>
    <property type="match status" value="1"/>
</dbReference>
<dbReference type="PRINTS" id="PR00190">
    <property type="entry name" value="ACTIN"/>
</dbReference>
<dbReference type="SMART" id="SM00268">
    <property type="entry name" value="ACTIN"/>
    <property type="match status" value="1"/>
</dbReference>
<dbReference type="SUPFAM" id="SSF53067">
    <property type="entry name" value="Actin-like ATPase domain"/>
    <property type="match status" value="2"/>
</dbReference>
<dbReference type="PROSITE" id="PS00406">
    <property type="entry name" value="ACTINS_1"/>
    <property type="match status" value="1"/>
</dbReference>
<dbReference type="PROSITE" id="PS00432">
    <property type="entry name" value="ACTINS_2"/>
    <property type="match status" value="1"/>
</dbReference>
<dbReference type="PROSITE" id="PS01132">
    <property type="entry name" value="ACTINS_ACT_LIKE"/>
    <property type="match status" value="1"/>
</dbReference>
<keyword id="KW-0007">Acetylation</keyword>
<keyword id="KW-0993">Aortic aneurysm</keyword>
<keyword id="KW-0067">ATP-binding</keyword>
<keyword id="KW-0963">Cytoplasm</keyword>
<keyword id="KW-0206">Cytoskeleton</keyword>
<keyword id="KW-0225">Disease variant</keyword>
<keyword id="KW-0378">Hydrolase</keyword>
<keyword id="KW-1017">Isopeptide bond</keyword>
<keyword id="KW-0488">Methylation</keyword>
<keyword id="KW-0514">Muscle protein</keyword>
<keyword id="KW-0547">Nucleotide-binding</keyword>
<keyword id="KW-0558">Oxidation</keyword>
<keyword id="KW-1267">Proteomics identification</keyword>
<keyword id="KW-1185">Reference proteome</keyword>
<evidence type="ECO:0000250" key="1">
    <source>
        <dbReference type="UniProtKB" id="P60709"/>
    </source>
</evidence>
<evidence type="ECO:0000250" key="2">
    <source>
        <dbReference type="UniProtKB" id="P62737"/>
    </source>
</evidence>
<evidence type="ECO:0000250" key="3">
    <source>
        <dbReference type="UniProtKB" id="P68032"/>
    </source>
</evidence>
<evidence type="ECO:0000250" key="4">
    <source>
        <dbReference type="UniProtKB" id="P68137"/>
    </source>
</evidence>
<evidence type="ECO:0000269" key="5">
    <source>
    </source>
</evidence>
<evidence type="ECO:0000269" key="6">
    <source>
    </source>
</evidence>
<evidence type="ECO:0000269" key="7">
    <source>
    </source>
</evidence>
<evidence type="ECO:0000269" key="8">
    <source>
    </source>
</evidence>
<evidence type="ECO:0000269" key="9">
    <source>
    </source>
</evidence>
<evidence type="ECO:0000269" key="10">
    <source>
    </source>
</evidence>
<evidence type="ECO:0000269" key="11">
    <source>
    </source>
</evidence>
<evidence type="ECO:0000269" key="12">
    <source>
    </source>
</evidence>
<evidence type="ECO:0000305" key="13"/>
<evidence type="ECO:0000305" key="14">
    <source>
    </source>
</evidence>
<evidence type="ECO:0000305" key="15">
    <source>
    </source>
</evidence>
<evidence type="ECO:0007744" key="16">
    <source>
    </source>
</evidence>
<comment type="function">
    <text>Actins are highly conserved proteins that are involved in various types of cell motility and are ubiquitously expressed in all eukaryotic cells.</text>
</comment>
<comment type="catalytic activity">
    <reaction evidence="4">
        <text>ATP + H2O = ADP + phosphate + H(+)</text>
        <dbReference type="Rhea" id="RHEA:13065"/>
        <dbReference type="ChEBI" id="CHEBI:15377"/>
        <dbReference type="ChEBI" id="CHEBI:15378"/>
        <dbReference type="ChEBI" id="CHEBI:30616"/>
        <dbReference type="ChEBI" id="CHEBI:43474"/>
        <dbReference type="ChEBI" id="CHEBI:456216"/>
    </reaction>
</comment>
<comment type="subunit">
    <text>Polymerization of globular actin (G-actin) leads to a structural filament (F-actin) in the form of a two-stranded helix. Each actin can bind to 4 others.</text>
</comment>
<comment type="interaction">
    <interactant intactId="EBI-698810">
        <id>P62736</id>
    </interactant>
    <interactant intactId="EBI-3046641">
        <id>P17900</id>
        <label>GM2A</label>
    </interactant>
    <organismsDiffer>false</organismsDiffer>
    <experiments>2</experiments>
</comment>
<comment type="interaction">
    <interactant intactId="EBI-698810">
        <id>P62736</id>
    </interactant>
    <interactant intactId="EBI-2603996">
        <id>Q9BXW4</id>
        <label>MAP1LC3C</label>
    </interactant>
    <organismsDiffer>false</organismsDiffer>
    <experiments>2</experiments>
</comment>
<comment type="interaction">
    <interactant intactId="EBI-698810">
        <id>P62736</id>
    </interactant>
    <interactant intactId="EBI-7797649">
        <id>P11684</id>
        <label>SCGB1A1</label>
    </interactant>
    <organismsDiffer>false</organismsDiffer>
    <experiments>2</experiments>
</comment>
<comment type="interaction">
    <interactant intactId="EBI-698810">
        <id>P62736</id>
    </interactant>
    <interactant intactId="EBI-11897462">
        <id>Q8N4U5</id>
        <label>TCP11L2</label>
    </interactant>
    <organismsDiffer>false</organismsDiffer>
    <experiments>2</experiments>
</comment>
<comment type="interaction">
    <interactant intactId="EBI-698810">
        <id>P62736</id>
    </interactant>
    <interactant intactId="EBI-751204">
        <id>Q9BWQ6</id>
        <label>YIPF2</label>
    </interactant>
    <organismsDiffer>false</organismsDiffer>
    <experiments>2</experiments>
</comment>
<comment type="subcellular location">
    <subcellularLocation>
        <location>Cytoplasm</location>
        <location>Cytoskeleton</location>
    </subcellularLocation>
</comment>
<comment type="induction">
    <text evidence="5">Up-regulated in response to enterovirus 71 (EV71) infection.</text>
</comment>
<comment type="PTM">
    <text evidence="2">Oxidation of Met-46 and Met-49 by MICALs (MICAL1, MICAL2 or MICAL3) to form methionine sulfoxide promotes actin filament depolymerization. MICAL1 and MICAL2 produce the (R)-S-oxide form. The (R)-S-oxide form is reverted by MSRB1 and MSRB2, which promotes actin repolymerization.</text>
</comment>
<comment type="PTM">
    <text evidence="3">Monomethylation at Lys-86 (K84me1) regulates actin-myosin interaction and actomyosin-dependent processes. Demethylation by ALKBH4 is required for maintaining actomyosin dynamics supporting normal cleavage furrow ingression during cytokinesis and cell migration.</text>
</comment>
<comment type="PTM">
    <text evidence="12">Methylated at His-75 by SETD3.</text>
</comment>
<comment type="PTM">
    <molecule>Actin, aortic smooth muscle, intermediate form</molecule>
    <text evidence="2">N-terminal cleavage of acetylated cysteine of intermediate muscle actin by ACTMAP.</text>
</comment>
<comment type="PTM">
    <text evidence="14 15">(Microbial infection) Monomeric actin is cross-linked by V.cholerae toxins RtxA and VgrG1 in case of infection: bacterial toxins mediate the cross-link between Lys-52 of one monomer and Glu-272 of another actin monomer, resulting in formation of highly toxic actin oligomers that cause cell rounding (PubMed:19015515). The toxin can be highly efficient at very low concentrations by acting on formin homology family proteins: toxic actin oligomers bind with high affinity to formins and adversely affect both nucleation and elongation abilities of formins, causing their potent inhibition in both profilin-dependent and independent manners (PubMed:26228148).</text>
</comment>
<comment type="disease">
    <text evidence="7">ACTA2 mutations predispose patients to a variety of diffuse and diverse vascular diseases, premature onset coronary artery disease (CAD), premature ischemic strokes and Moyamoya disease.</text>
</comment>
<comment type="disease" evidence="6 7 8">
    <disease id="DI-00130">
        <name>Aortic aneurysm, familial thoracic 6</name>
        <acronym>AAT6</acronym>
        <description>A disease characterized by permanent dilation of the thoracic aorta usually due to degenerative changes in the aortic wall. It is primarily associated with a characteristic histologic appearance known as 'medial necrosis' or 'Erdheim cystic medial necrosis' in which there is degeneration and fragmentation of elastic fibers, loss of smooth muscle cells, and an accumulation of basophilic ground substance.</description>
        <dbReference type="MIM" id="611788"/>
    </disease>
    <text>The disease is caused by variants affecting the gene represented in this entry.</text>
</comment>
<comment type="disease" evidence="10">
    <disease id="DI-03141">
        <name>Moyamoya disease 5</name>
        <acronym>MYMY5</acronym>
        <description>A progressive cerebral angiopathy characterized by bilateral intracranial carotid artery stenosis and telangiectatic vessels in the region of the basal ganglia. The abnormal vessels resemble a 'puff of smoke' (moyamoya) on cerebral angiogram. Affected individuals can develop transient ischemic attacks and/or cerebral infarction, and rupture of the collateral vessels can cause intracranial hemorrhage. Hemiplegia of sudden onset and epileptic seizures constitute the prevailing presentation in childhood, while subarachnoid bleeding occurs more frequently in adults.</description>
        <dbReference type="MIM" id="614042"/>
    </disease>
    <text>The disease is caused by variants affecting the gene represented in this entry.</text>
</comment>
<comment type="disease" evidence="9 11">
    <disease id="DI-03109">
        <name>Smooth muscle dysfunction syndrome</name>
        <acronym>SMDYS</acronym>
        <description>An autosomal dominant syndrome characterized by dysfunction of smooth muscle cells throughout the body, leading to aortic and cerebrovascular disease, fixed dilated pupils, hypotonic bladder, malrotation, and hypoperistalsis of the gut and pulmonary hypertension.</description>
        <dbReference type="MIM" id="613834"/>
    </disease>
    <text>The disease is caused by variants affecting the gene represented in this entry.</text>
</comment>
<comment type="miscellaneous">
    <text>In vertebrates 3 main groups of actin isoforms, alpha, beta and gamma have been identified. The alpha actins are found in muscle tissues and are a major constituent of the contractile apparatus. The beta and gamma actins coexist in most cell types as components of the cytoskeleton and as mediators of internal cell motility.</text>
</comment>
<comment type="similarity">
    <text evidence="13">Belongs to the actin family.</text>
</comment>
<organism>
    <name type="scientific">Homo sapiens</name>
    <name type="common">Human</name>
    <dbReference type="NCBI Taxonomy" id="9606"/>
    <lineage>
        <taxon>Eukaryota</taxon>
        <taxon>Metazoa</taxon>
        <taxon>Chordata</taxon>
        <taxon>Craniata</taxon>
        <taxon>Vertebrata</taxon>
        <taxon>Euteleostomi</taxon>
        <taxon>Mammalia</taxon>
        <taxon>Eutheria</taxon>
        <taxon>Euarchontoglires</taxon>
        <taxon>Primates</taxon>
        <taxon>Haplorrhini</taxon>
        <taxon>Catarrhini</taxon>
        <taxon>Hominidae</taxon>
        <taxon>Homo</taxon>
    </lineage>
</organism>
<name>ACTA_HUMAN</name>